<gene>
    <name evidence="1" type="primary">lgt</name>
    <name type="ordered locus">SeD_A3329</name>
</gene>
<name>LGT_SALDC</name>
<keyword id="KW-0997">Cell inner membrane</keyword>
<keyword id="KW-1003">Cell membrane</keyword>
<keyword id="KW-0472">Membrane</keyword>
<keyword id="KW-0808">Transferase</keyword>
<keyword id="KW-0812">Transmembrane</keyword>
<keyword id="KW-1133">Transmembrane helix</keyword>
<feature type="chain" id="PRO_1000137452" description="Phosphatidylglycerol--prolipoprotein diacylglyceryl transferase">
    <location>
        <begin position="1"/>
        <end position="291"/>
    </location>
</feature>
<feature type="transmembrane region" description="Helical" evidence="1">
    <location>
        <begin position="21"/>
        <end position="41"/>
    </location>
</feature>
<feature type="transmembrane region" description="Helical" evidence="1">
    <location>
        <begin position="60"/>
        <end position="80"/>
    </location>
</feature>
<feature type="transmembrane region" description="Helical" evidence="1">
    <location>
        <begin position="96"/>
        <end position="116"/>
    </location>
</feature>
<feature type="transmembrane region" description="Helical" evidence="1">
    <location>
        <begin position="130"/>
        <end position="150"/>
    </location>
</feature>
<feature type="transmembrane region" description="Helical" evidence="1">
    <location>
        <begin position="198"/>
        <end position="218"/>
    </location>
</feature>
<feature type="transmembrane region" description="Helical" evidence="1">
    <location>
        <begin position="225"/>
        <end position="245"/>
    </location>
</feature>
<feature type="transmembrane region" description="Helical" evidence="1">
    <location>
        <begin position="260"/>
        <end position="280"/>
    </location>
</feature>
<feature type="binding site" evidence="1">
    <location>
        <position position="143"/>
    </location>
    <ligand>
        <name>a 1,2-diacyl-sn-glycero-3-phospho-(1'-sn-glycerol)</name>
        <dbReference type="ChEBI" id="CHEBI:64716"/>
    </ligand>
</feature>
<sequence length="291" mass="33075">MTSSYLHFPDFDPVIFSIGPVALHWYGLMYLVGFVFAMWLAVRRANRPGSGWTKNEVENLLYAGFLGVFLGGRIGYVLFYNFPLFLDNPLYLFRVWDGGMSFHGGLIGVILVMIIFARRTKRSFFQVSDFIAPLIPFGLGAGRLGNFINGELWGRVDPDFRFAMLFPGSRAEDIALLPSHPQWQPIFDTYGVLPRHPSQLYELALEGVVLFIILNLFIRKPRPMGAVSGLFLIGYGAFRIIVEFFRQPDAQFTGAWVQYISMGQILSIPMIIAGAIMMVWAYRRRPQQHVS</sequence>
<comment type="function">
    <text evidence="1">Catalyzes the transfer of the diacylglyceryl group from phosphatidylglycerol to the sulfhydryl group of the N-terminal cysteine of a prolipoprotein, the first step in the formation of mature lipoproteins.</text>
</comment>
<comment type="catalytic activity">
    <reaction evidence="1">
        <text>L-cysteinyl-[prolipoprotein] + a 1,2-diacyl-sn-glycero-3-phospho-(1'-sn-glycerol) = an S-1,2-diacyl-sn-glyceryl-L-cysteinyl-[prolipoprotein] + sn-glycerol 1-phosphate + H(+)</text>
        <dbReference type="Rhea" id="RHEA:56712"/>
        <dbReference type="Rhea" id="RHEA-COMP:14679"/>
        <dbReference type="Rhea" id="RHEA-COMP:14680"/>
        <dbReference type="ChEBI" id="CHEBI:15378"/>
        <dbReference type="ChEBI" id="CHEBI:29950"/>
        <dbReference type="ChEBI" id="CHEBI:57685"/>
        <dbReference type="ChEBI" id="CHEBI:64716"/>
        <dbReference type="ChEBI" id="CHEBI:140658"/>
        <dbReference type="EC" id="2.5.1.145"/>
    </reaction>
</comment>
<comment type="pathway">
    <text evidence="1">Protein modification; lipoprotein biosynthesis (diacylglyceryl transfer).</text>
</comment>
<comment type="subcellular location">
    <subcellularLocation>
        <location evidence="1">Cell inner membrane</location>
        <topology evidence="1">Multi-pass membrane protein</topology>
    </subcellularLocation>
</comment>
<comment type="similarity">
    <text evidence="1">Belongs to the Lgt family.</text>
</comment>
<evidence type="ECO:0000255" key="1">
    <source>
        <dbReference type="HAMAP-Rule" id="MF_01147"/>
    </source>
</evidence>
<proteinExistence type="inferred from homology"/>
<dbReference type="EC" id="2.5.1.145" evidence="1"/>
<dbReference type="EMBL" id="CP001144">
    <property type="protein sequence ID" value="ACH76265.1"/>
    <property type="molecule type" value="Genomic_DNA"/>
</dbReference>
<dbReference type="RefSeq" id="WP_000204645.1">
    <property type="nucleotide sequence ID" value="NC_011205.1"/>
</dbReference>
<dbReference type="SMR" id="B5FUB0"/>
<dbReference type="KEGG" id="sed:SeD_A3329"/>
<dbReference type="HOGENOM" id="CLU_013386_1_0_6"/>
<dbReference type="UniPathway" id="UPA00664"/>
<dbReference type="Proteomes" id="UP000008322">
    <property type="component" value="Chromosome"/>
</dbReference>
<dbReference type="GO" id="GO:0005886">
    <property type="term" value="C:plasma membrane"/>
    <property type="evidence" value="ECO:0007669"/>
    <property type="project" value="UniProtKB-SubCell"/>
</dbReference>
<dbReference type="GO" id="GO:0008961">
    <property type="term" value="F:phosphatidylglycerol-prolipoprotein diacylglyceryl transferase activity"/>
    <property type="evidence" value="ECO:0007669"/>
    <property type="project" value="UniProtKB-UniRule"/>
</dbReference>
<dbReference type="GO" id="GO:0042158">
    <property type="term" value="P:lipoprotein biosynthetic process"/>
    <property type="evidence" value="ECO:0007669"/>
    <property type="project" value="UniProtKB-UniRule"/>
</dbReference>
<dbReference type="HAMAP" id="MF_01147">
    <property type="entry name" value="Lgt"/>
    <property type="match status" value="1"/>
</dbReference>
<dbReference type="InterPro" id="IPR001640">
    <property type="entry name" value="Lgt"/>
</dbReference>
<dbReference type="NCBIfam" id="TIGR00544">
    <property type="entry name" value="lgt"/>
    <property type="match status" value="1"/>
</dbReference>
<dbReference type="PANTHER" id="PTHR30589:SF0">
    <property type="entry name" value="PHOSPHATIDYLGLYCEROL--PROLIPOPROTEIN DIACYLGLYCERYL TRANSFERASE"/>
    <property type="match status" value="1"/>
</dbReference>
<dbReference type="PANTHER" id="PTHR30589">
    <property type="entry name" value="PROLIPOPROTEIN DIACYLGLYCERYL TRANSFERASE"/>
    <property type="match status" value="1"/>
</dbReference>
<dbReference type="Pfam" id="PF01790">
    <property type="entry name" value="LGT"/>
    <property type="match status" value="1"/>
</dbReference>
<dbReference type="PROSITE" id="PS01311">
    <property type="entry name" value="LGT"/>
    <property type="match status" value="1"/>
</dbReference>
<accession>B5FUB0</accession>
<protein>
    <recommendedName>
        <fullName evidence="1">Phosphatidylglycerol--prolipoprotein diacylglyceryl transferase</fullName>
        <ecNumber evidence="1">2.5.1.145</ecNumber>
    </recommendedName>
</protein>
<reference key="1">
    <citation type="journal article" date="2011" name="J. Bacteriol.">
        <title>Comparative genomics of 28 Salmonella enterica isolates: evidence for CRISPR-mediated adaptive sublineage evolution.</title>
        <authorList>
            <person name="Fricke W.F."/>
            <person name="Mammel M.K."/>
            <person name="McDermott P.F."/>
            <person name="Tartera C."/>
            <person name="White D.G."/>
            <person name="Leclerc J.E."/>
            <person name="Ravel J."/>
            <person name="Cebula T.A."/>
        </authorList>
    </citation>
    <scope>NUCLEOTIDE SEQUENCE [LARGE SCALE GENOMIC DNA]</scope>
    <source>
        <strain>CT_02021853</strain>
    </source>
</reference>
<organism>
    <name type="scientific">Salmonella dublin (strain CT_02021853)</name>
    <dbReference type="NCBI Taxonomy" id="439851"/>
    <lineage>
        <taxon>Bacteria</taxon>
        <taxon>Pseudomonadati</taxon>
        <taxon>Pseudomonadota</taxon>
        <taxon>Gammaproteobacteria</taxon>
        <taxon>Enterobacterales</taxon>
        <taxon>Enterobacteriaceae</taxon>
        <taxon>Salmonella</taxon>
    </lineage>
</organism>